<dbReference type="EC" id="6.2.1.5" evidence="1"/>
<dbReference type="EMBL" id="AE016879">
    <property type="protein sequence ID" value="AAP27702.1"/>
    <property type="molecule type" value="Genomic_DNA"/>
</dbReference>
<dbReference type="EMBL" id="AE017334">
    <property type="protein sequence ID" value="AAT33088.1"/>
    <property type="molecule type" value="Genomic_DNA"/>
</dbReference>
<dbReference type="EMBL" id="AE017225">
    <property type="protein sequence ID" value="AAT55989.1"/>
    <property type="molecule type" value="Genomic_DNA"/>
</dbReference>
<dbReference type="RefSeq" id="NP_846216.1">
    <property type="nucleotide sequence ID" value="NC_003997.3"/>
</dbReference>
<dbReference type="RefSeq" id="WP_001020786.1">
    <property type="nucleotide sequence ID" value="NZ_WXXJ01000026.1"/>
</dbReference>
<dbReference type="RefSeq" id="YP_029938.1">
    <property type="nucleotide sequence ID" value="NC_005945.1"/>
</dbReference>
<dbReference type="SMR" id="Q81WK0"/>
<dbReference type="STRING" id="261594.GBAA_3974"/>
<dbReference type="DNASU" id="1086813"/>
<dbReference type="GeneID" id="45023664"/>
<dbReference type="KEGG" id="ban:BA_3974"/>
<dbReference type="KEGG" id="banh:HYU01_19420"/>
<dbReference type="KEGG" id="bar:GBAA_3974"/>
<dbReference type="KEGG" id="bat:BAS3687"/>
<dbReference type="PATRIC" id="fig|198094.11.peg.3944"/>
<dbReference type="eggNOG" id="COG0045">
    <property type="taxonomic scope" value="Bacteria"/>
</dbReference>
<dbReference type="HOGENOM" id="CLU_037430_0_2_9"/>
<dbReference type="OMA" id="ITACDEV"/>
<dbReference type="OrthoDB" id="9802602at2"/>
<dbReference type="UniPathway" id="UPA00223">
    <property type="reaction ID" value="UER00999"/>
</dbReference>
<dbReference type="Proteomes" id="UP000000427">
    <property type="component" value="Chromosome"/>
</dbReference>
<dbReference type="Proteomes" id="UP000000594">
    <property type="component" value="Chromosome"/>
</dbReference>
<dbReference type="GO" id="GO:0005829">
    <property type="term" value="C:cytosol"/>
    <property type="evidence" value="ECO:0007669"/>
    <property type="project" value="TreeGrafter"/>
</dbReference>
<dbReference type="GO" id="GO:0042709">
    <property type="term" value="C:succinate-CoA ligase complex"/>
    <property type="evidence" value="ECO:0007669"/>
    <property type="project" value="TreeGrafter"/>
</dbReference>
<dbReference type="GO" id="GO:0005524">
    <property type="term" value="F:ATP binding"/>
    <property type="evidence" value="ECO:0007669"/>
    <property type="project" value="UniProtKB-UniRule"/>
</dbReference>
<dbReference type="GO" id="GO:0000287">
    <property type="term" value="F:magnesium ion binding"/>
    <property type="evidence" value="ECO:0007669"/>
    <property type="project" value="UniProtKB-UniRule"/>
</dbReference>
<dbReference type="GO" id="GO:0004775">
    <property type="term" value="F:succinate-CoA ligase (ADP-forming) activity"/>
    <property type="evidence" value="ECO:0007669"/>
    <property type="project" value="UniProtKB-UniRule"/>
</dbReference>
<dbReference type="GO" id="GO:0004776">
    <property type="term" value="F:succinate-CoA ligase (GDP-forming) activity"/>
    <property type="evidence" value="ECO:0007669"/>
    <property type="project" value="RHEA"/>
</dbReference>
<dbReference type="GO" id="GO:0006104">
    <property type="term" value="P:succinyl-CoA metabolic process"/>
    <property type="evidence" value="ECO:0007669"/>
    <property type="project" value="TreeGrafter"/>
</dbReference>
<dbReference type="GO" id="GO:0006099">
    <property type="term" value="P:tricarboxylic acid cycle"/>
    <property type="evidence" value="ECO:0007669"/>
    <property type="project" value="UniProtKB-UniRule"/>
</dbReference>
<dbReference type="FunFam" id="3.30.1490.20:FF:000002">
    <property type="entry name" value="Succinate--CoA ligase [ADP-forming] subunit beta"/>
    <property type="match status" value="1"/>
</dbReference>
<dbReference type="FunFam" id="3.30.470.20:FF:000002">
    <property type="entry name" value="Succinate--CoA ligase [ADP-forming] subunit beta"/>
    <property type="match status" value="1"/>
</dbReference>
<dbReference type="FunFam" id="3.40.50.261:FF:000001">
    <property type="entry name" value="Succinate--CoA ligase [ADP-forming] subunit beta"/>
    <property type="match status" value="1"/>
</dbReference>
<dbReference type="Gene3D" id="3.30.1490.20">
    <property type="entry name" value="ATP-grasp fold, A domain"/>
    <property type="match status" value="1"/>
</dbReference>
<dbReference type="Gene3D" id="3.30.470.20">
    <property type="entry name" value="ATP-grasp fold, B domain"/>
    <property type="match status" value="1"/>
</dbReference>
<dbReference type="Gene3D" id="3.40.50.261">
    <property type="entry name" value="Succinyl-CoA synthetase domains"/>
    <property type="match status" value="1"/>
</dbReference>
<dbReference type="HAMAP" id="MF_00558">
    <property type="entry name" value="Succ_CoA_beta"/>
    <property type="match status" value="1"/>
</dbReference>
<dbReference type="InterPro" id="IPR011761">
    <property type="entry name" value="ATP-grasp"/>
</dbReference>
<dbReference type="InterPro" id="IPR013650">
    <property type="entry name" value="ATP-grasp_succ-CoA_synth-type"/>
</dbReference>
<dbReference type="InterPro" id="IPR013815">
    <property type="entry name" value="ATP_grasp_subdomain_1"/>
</dbReference>
<dbReference type="InterPro" id="IPR005811">
    <property type="entry name" value="SUCC_ACL_C"/>
</dbReference>
<dbReference type="InterPro" id="IPR005809">
    <property type="entry name" value="Succ_CoA_ligase-like_bsu"/>
</dbReference>
<dbReference type="InterPro" id="IPR016102">
    <property type="entry name" value="Succinyl-CoA_synth-like"/>
</dbReference>
<dbReference type="NCBIfam" id="NF001913">
    <property type="entry name" value="PRK00696.1"/>
    <property type="match status" value="1"/>
</dbReference>
<dbReference type="NCBIfam" id="TIGR01016">
    <property type="entry name" value="sucCoAbeta"/>
    <property type="match status" value="1"/>
</dbReference>
<dbReference type="PANTHER" id="PTHR11815:SF10">
    <property type="entry name" value="SUCCINATE--COA LIGASE [GDP-FORMING] SUBUNIT BETA, MITOCHONDRIAL"/>
    <property type="match status" value="1"/>
</dbReference>
<dbReference type="PANTHER" id="PTHR11815">
    <property type="entry name" value="SUCCINYL-COA SYNTHETASE BETA CHAIN"/>
    <property type="match status" value="1"/>
</dbReference>
<dbReference type="Pfam" id="PF08442">
    <property type="entry name" value="ATP-grasp_2"/>
    <property type="match status" value="1"/>
</dbReference>
<dbReference type="Pfam" id="PF00549">
    <property type="entry name" value="Ligase_CoA"/>
    <property type="match status" value="1"/>
</dbReference>
<dbReference type="PIRSF" id="PIRSF001554">
    <property type="entry name" value="SucCS_beta"/>
    <property type="match status" value="1"/>
</dbReference>
<dbReference type="SUPFAM" id="SSF56059">
    <property type="entry name" value="Glutathione synthetase ATP-binding domain-like"/>
    <property type="match status" value="1"/>
</dbReference>
<dbReference type="SUPFAM" id="SSF52210">
    <property type="entry name" value="Succinyl-CoA synthetase domains"/>
    <property type="match status" value="1"/>
</dbReference>
<dbReference type="PROSITE" id="PS50975">
    <property type="entry name" value="ATP_GRASP"/>
    <property type="match status" value="1"/>
</dbReference>
<sequence>MNIHEYQGKAVLRSYGVSVPNGKVAFTVEEAVEAAKELGTDVCVVKAQIHAGGRGKAGGVKVAKNLDEVRTYAESILGTTLVTHQTGPEGKEVKRLLIEEGCDIKKEYYVGLVLDRATSQVVLMASEEGGTEIEEVAEKTPEKIFKEYIDPAVGLQGFQARRIAFNINIPKELVGQAVKFMMGLYRAFIEKDCSIAEINPLVTTGDGKVMALDAKLNFDSNALYRHKDILELRDLDEEDAKEIEASKYDLNYIPLDGNIGCMVNGAGLAMATMDIIKHYHGDPANFLDVGGGATAEKVTEAFKIILSDKNVKGIFVNIFGGIMKCDVIAEGVIEATKQVGLELPLVVRLEGTNVELGKKILNESGLNIVAAESMTDGAQKIVSLVG</sequence>
<feature type="chain" id="PRO_1000082006" description="Succinate--CoA ligase [ADP-forming] subunit beta">
    <location>
        <begin position="1"/>
        <end position="386"/>
    </location>
</feature>
<feature type="domain" description="ATP-grasp" evidence="1">
    <location>
        <begin position="9"/>
        <end position="244"/>
    </location>
</feature>
<feature type="binding site" evidence="1">
    <location>
        <position position="46"/>
    </location>
    <ligand>
        <name>ATP</name>
        <dbReference type="ChEBI" id="CHEBI:30616"/>
    </ligand>
</feature>
<feature type="binding site" evidence="1">
    <location>
        <begin position="53"/>
        <end position="55"/>
    </location>
    <ligand>
        <name>ATP</name>
        <dbReference type="ChEBI" id="CHEBI:30616"/>
    </ligand>
</feature>
<feature type="binding site" evidence="1">
    <location>
        <position position="99"/>
    </location>
    <ligand>
        <name>ATP</name>
        <dbReference type="ChEBI" id="CHEBI:30616"/>
    </ligand>
</feature>
<feature type="binding site" evidence="1">
    <location>
        <position position="102"/>
    </location>
    <ligand>
        <name>ATP</name>
        <dbReference type="ChEBI" id="CHEBI:30616"/>
    </ligand>
</feature>
<feature type="binding site" evidence="1">
    <location>
        <position position="107"/>
    </location>
    <ligand>
        <name>ATP</name>
        <dbReference type="ChEBI" id="CHEBI:30616"/>
    </ligand>
</feature>
<feature type="binding site" evidence="1">
    <location>
        <position position="199"/>
    </location>
    <ligand>
        <name>Mg(2+)</name>
        <dbReference type="ChEBI" id="CHEBI:18420"/>
    </ligand>
</feature>
<feature type="binding site" evidence="1">
    <location>
        <position position="213"/>
    </location>
    <ligand>
        <name>Mg(2+)</name>
        <dbReference type="ChEBI" id="CHEBI:18420"/>
    </ligand>
</feature>
<feature type="binding site" evidence="1">
    <location>
        <position position="264"/>
    </location>
    <ligand>
        <name>substrate</name>
        <note>ligand shared with subunit alpha</note>
    </ligand>
</feature>
<feature type="binding site" evidence="1">
    <location>
        <begin position="321"/>
        <end position="323"/>
    </location>
    <ligand>
        <name>substrate</name>
        <note>ligand shared with subunit alpha</note>
    </ligand>
</feature>
<organism>
    <name type="scientific">Bacillus anthracis</name>
    <dbReference type="NCBI Taxonomy" id="1392"/>
    <lineage>
        <taxon>Bacteria</taxon>
        <taxon>Bacillati</taxon>
        <taxon>Bacillota</taxon>
        <taxon>Bacilli</taxon>
        <taxon>Bacillales</taxon>
        <taxon>Bacillaceae</taxon>
        <taxon>Bacillus</taxon>
        <taxon>Bacillus cereus group</taxon>
    </lineage>
</organism>
<proteinExistence type="inferred from homology"/>
<accession>Q81WK0</accession>
<accession>Q6HUQ0</accession>
<accession>Q6KNY2</accession>
<gene>
    <name evidence="1" type="primary">sucC</name>
    <name type="ordered locus">BA_3974</name>
    <name type="ordered locus">GBAA_3974</name>
    <name type="ordered locus">BAS3687</name>
</gene>
<reference key="1">
    <citation type="journal article" date="2003" name="Nature">
        <title>The genome sequence of Bacillus anthracis Ames and comparison to closely related bacteria.</title>
        <authorList>
            <person name="Read T.D."/>
            <person name="Peterson S.N."/>
            <person name="Tourasse N.J."/>
            <person name="Baillie L.W."/>
            <person name="Paulsen I.T."/>
            <person name="Nelson K.E."/>
            <person name="Tettelin H."/>
            <person name="Fouts D.E."/>
            <person name="Eisen J.A."/>
            <person name="Gill S.R."/>
            <person name="Holtzapple E.K."/>
            <person name="Okstad O.A."/>
            <person name="Helgason E."/>
            <person name="Rilstone J."/>
            <person name="Wu M."/>
            <person name="Kolonay J.F."/>
            <person name="Beanan M.J."/>
            <person name="Dodson R.J."/>
            <person name="Brinkac L.M."/>
            <person name="Gwinn M.L."/>
            <person name="DeBoy R.T."/>
            <person name="Madpu R."/>
            <person name="Daugherty S.C."/>
            <person name="Durkin A.S."/>
            <person name="Haft D.H."/>
            <person name="Nelson W.C."/>
            <person name="Peterson J.D."/>
            <person name="Pop M."/>
            <person name="Khouri H.M."/>
            <person name="Radune D."/>
            <person name="Benton J.L."/>
            <person name="Mahamoud Y."/>
            <person name="Jiang L."/>
            <person name="Hance I.R."/>
            <person name="Weidman J.F."/>
            <person name="Berry K.J."/>
            <person name="Plaut R.D."/>
            <person name="Wolf A.M."/>
            <person name="Watkins K.L."/>
            <person name="Nierman W.C."/>
            <person name="Hazen A."/>
            <person name="Cline R.T."/>
            <person name="Redmond C."/>
            <person name="Thwaite J.E."/>
            <person name="White O."/>
            <person name="Salzberg S.L."/>
            <person name="Thomason B."/>
            <person name="Friedlander A.M."/>
            <person name="Koehler T.M."/>
            <person name="Hanna P.C."/>
            <person name="Kolstoe A.-B."/>
            <person name="Fraser C.M."/>
        </authorList>
    </citation>
    <scope>NUCLEOTIDE SEQUENCE [LARGE SCALE GENOMIC DNA]</scope>
    <source>
        <strain>Ames / isolate Porton</strain>
    </source>
</reference>
<reference key="2">
    <citation type="submission" date="2004-01" db="EMBL/GenBank/DDBJ databases">
        <title>Complete genome sequence of Bacillus anthracis Sterne.</title>
        <authorList>
            <person name="Brettin T.S."/>
            <person name="Bruce D."/>
            <person name="Challacombe J.F."/>
            <person name="Gilna P."/>
            <person name="Han C."/>
            <person name="Hill K."/>
            <person name="Hitchcock P."/>
            <person name="Jackson P."/>
            <person name="Keim P."/>
            <person name="Longmire J."/>
            <person name="Lucas S."/>
            <person name="Okinaka R."/>
            <person name="Richardson P."/>
            <person name="Rubin E."/>
            <person name="Tice H."/>
        </authorList>
    </citation>
    <scope>NUCLEOTIDE SEQUENCE [LARGE SCALE GENOMIC DNA]</scope>
    <source>
        <strain>Sterne</strain>
    </source>
</reference>
<reference key="3">
    <citation type="journal article" date="2009" name="J. Bacteriol.">
        <title>The complete genome sequence of Bacillus anthracis Ames 'Ancestor'.</title>
        <authorList>
            <person name="Ravel J."/>
            <person name="Jiang L."/>
            <person name="Stanley S.T."/>
            <person name="Wilson M.R."/>
            <person name="Decker R.S."/>
            <person name="Read T.D."/>
            <person name="Worsham P."/>
            <person name="Keim P.S."/>
            <person name="Salzberg S.L."/>
            <person name="Fraser-Liggett C.M."/>
            <person name="Rasko D.A."/>
        </authorList>
    </citation>
    <scope>NUCLEOTIDE SEQUENCE [LARGE SCALE GENOMIC DNA]</scope>
    <source>
        <strain>Ames ancestor</strain>
    </source>
</reference>
<protein>
    <recommendedName>
        <fullName evidence="1">Succinate--CoA ligase [ADP-forming] subunit beta</fullName>
        <ecNumber evidence="1">6.2.1.5</ecNumber>
    </recommendedName>
    <alternativeName>
        <fullName evidence="1">Succinyl-CoA synthetase subunit beta</fullName>
        <shortName evidence="1">SCS-beta</shortName>
    </alternativeName>
</protein>
<keyword id="KW-0067">ATP-binding</keyword>
<keyword id="KW-0436">Ligase</keyword>
<keyword id="KW-0460">Magnesium</keyword>
<keyword id="KW-0479">Metal-binding</keyword>
<keyword id="KW-0547">Nucleotide-binding</keyword>
<keyword id="KW-1185">Reference proteome</keyword>
<keyword id="KW-0816">Tricarboxylic acid cycle</keyword>
<evidence type="ECO:0000255" key="1">
    <source>
        <dbReference type="HAMAP-Rule" id="MF_00558"/>
    </source>
</evidence>
<comment type="function">
    <text evidence="1">Succinyl-CoA synthetase functions in the citric acid cycle (TCA), coupling the hydrolysis of succinyl-CoA to the synthesis of either ATP or GTP and thus represents the only step of substrate-level phosphorylation in the TCA. The beta subunit provides nucleotide specificity of the enzyme and binds the substrate succinate, while the binding sites for coenzyme A and phosphate are found in the alpha subunit.</text>
</comment>
<comment type="catalytic activity">
    <reaction evidence="1">
        <text>succinate + ATP + CoA = succinyl-CoA + ADP + phosphate</text>
        <dbReference type="Rhea" id="RHEA:17661"/>
        <dbReference type="ChEBI" id="CHEBI:30031"/>
        <dbReference type="ChEBI" id="CHEBI:30616"/>
        <dbReference type="ChEBI" id="CHEBI:43474"/>
        <dbReference type="ChEBI" id="CHEBI:57287"/>
        <dbReference type="ChEBI" id="CHEBI:57292"/>
        <dbReference type="ChEBI" id="CHEBI:456216"/>
        <dbReference type="EC" id="6.2.1.5"/>
    </reaction>
    <physiologicalReaction direction="right-to-left" evidence="1">
        <dbReference type="Rhea" id="RHEA:17663"/>
    </physiologicalReaction>
</comment>
<comment type="catalytic activity">
    <reaction evidence="1">
        <text>GTP + succinate + CoA = succinyl-CoA + GDP + phosphate</text>
        <dbReference type="Rhea" id="RHEA:22120"/>
        <dbReference type="ChEBI" id="CHEBI:30031"/>
        <dbReference type="ChEBI" id="CHEBI:37565"/>
        <dbReference type="ChEBI" id="CHEBI:43474"/>
        <dbReference type="ChEBI" id="CHEBI:57287"/>
        <dbReference type="ChEBI" id="CHEBI:57292"/>
        <dbReference type="ChEBI" id="CHEBI:58189"/>
    </reaction>
    <physiologicalReaction direction="right-to-left" evidence="1">
        <dbReference type="Rhea" id="RHEA:22122"/>
    </physiologicalReaction>
</comment>
<comment type="cofactor">
    <cofactor evidence="1">
        <name>Mg(2+)</name>
        <dbReference type="ChEBI" id="CHEBI:18420"/>
    </cofactor>
    <text evidence="1">Binds 1 Mg(2+) ion per subunit.</text>
</comment>
<comment type="pathway">
    <text evidence="1">Carbohydrate metabolism; tricarboxylic acid cycle; succinate from succinyl-CoA (ligase route): step 1/1.</text>
</comment>
<comment type="subunit">
    <text evidence="1">Heterotetramer of two alpha and two beta subunits.</text>
</comment>
<comment type="similarity">
    <text evidence="1">Belongs to the succinate/malate CoA ligase beta subunit family.</text>
</comment>
<name>SUCC_BACAN</name>